<gene>
    <name type="primary">Ppih</name>
</gene>
<dbReference type="EC" id="5.2.1.8" evidence="2"/>
<dbReference type="EMBL" id="AK003179">
    <property type="protein sequence ID" value="BAB22623.1"/>
    <property type="molecule type" value="mRNA"/>
</dbReference>
<dbReference type="EMBL" id="AK008394">
    <property type="protein sequence ID" value="BAB25645.1"/>
    <property type="molecule type" value="mRNA"/>
</dbReference>
<dbReference type="EMBL" id="AK005202">
    <property type="protein sequence ID" value="BAB23880.1"/>
    <property type="molecule type" value="mRNA"/>
</dbReference>
<dbReference type="EMBL" id="AK014665">
    <property type="protein sequence ID" value="BAB29493.1"/>
    <property type="molecule type" value="mRNA"/>
</dbReference>
<dbReference type="EMBL" id="BC016565">
    <property type="status" value="NOT_ANNOTATED_CDS"/>
    <property type="molecule type" value="mRNA"/>
</dbReference>
<dbReference type="EMBL" id="BC050116">
    <property type="protein sequence ID" value="AAH50116.1"/>
    <property type="molecule type" value="mRNA"/>
</dbReference>
<dbReference type="CCDS" id="CCDS18580.1">
    <molecule id="Q9D868-2"/>
</dbReference>
<dbReference type="CCDS" id="CCDS51288.1">
    <molecule id="Q9D868-1"/>
</dbReference>
<dbReference type="RefSeq" id="NP_001103599.1">
    <molecule id="Q9D868-2"/>
    <property type="nucleotide sequence ID" value="NM_001110129.1"/>
</dbReference>
<dbReference type="RefSeq" id="NP_001103600.1">
    <molecule id="Q9D868-1"/>
    <property type="nucleotide sequence ID" value="NM_001110130.1"/>
</dbReference>
<dbReference type="RefSeq" id="NP_082953.1">
    <molecule id="Q9D868-2"/>
    <property type="nucleotide sequence ID" value="NM_028677.4"/>
</dbReference>
<dbReference type="SMR" id="Q9D868"/>
<dbReference type="BioGRID" id="211213">
    <property type="interactions" value="1"/>
</dbReference>
<dbReference type="FunCoup" id="Q9D868">
    <property type="interactions" value="4596"/>
</dbReference>
<dbReference type="IntAct" id="Q9D868">
    <property type="interactions" value="1"/>
</dbReference>
<dbReference type="STRING" id="10090.ENSMUSP00000101924"/>
<dbReference type="iPTMnet" id="Q9D868"/>
<dbReference type="PhosphoSitePlus" id="Q9D868"/>
<dbReference type="jPOST" id="Q9D868"/>
<dbReference type="PaxDb" id="10090-ENSMUSP00000101924"/>
<dbReference type="PeptideAtlas" id="Q9D868"/>
<dbReference type="ProteomicsDB" id="289806">
    <molecule id="Q9D868-1"/>
</dbReference>
<dbReference type="ProteomicsDB" id="289807">
    <molecule id="Q9D868-2"/>
</dbReference>
<dbReference type="Pumba" id="Q9D868"/>
<dbReference type="DNASU" id="66101"/>
<dbReference type="Ensembl" id="ENSMUST00000056458.14">
    <molecule id="Q9D868-2"/>
    <property type="protein sequence ID" value="ENSMUSP00000051221.8"/>
    <property type="gene ID" value="ENSMUSG00000060288.14"/>
</dbReference>
<dbReference type="Ensembl" id="ENSMUST00000106317.2">
    <molecule id="Q9D868-1"/>
    <property type="protein sequence ID" value="ENSMUSP00000101924.2"/>
    <property type="gene ID" value="ENSMUSG00000060288.14"/>
</dbReference>
<dbReference type="Ensembl" id="ENSMUST00000106318.8">
    <molecule id="Q9D868-2"/>
    <property type="protein sequence ID" value="ENSMUSP00000101925.2"/>
    <property type="gene ID" value="ENSMUSG00000060288.14"/>
</dbReference>
<dbReference type="Ensembl" id="ENSMUST00000106321.9">
    <molecule id="Q9D868-2"/>
    <property type="protein sequence ID" value="ENSMUSP00000101928.3"/>
    <property type="gene ID" value="ENSMUSG00000060288.14"/>
</dbReference>
<dbReference type="Ensembl" id="ENSMUST00000122204.3">
    <molecule id="Q9D868-2"/>
    <property type="protein sequence ID" value="ENSMUSP00000142767.2"/>
    <property type="gene ID" value="ENSMUSG00000033036.10"/>
</dbReference>
<dbReference type="GeneID" id="66101"/>
<dbReference type="KEGG" id="mmu:66101"/>
<dbReference type="UCSC" id="uc008ulz.2">
    <molecule id="Q9D868-1"/>
    <property type="organism name" value="mouse"/>
</dbReference>
<dbReference type="AGR" id="MGI:106499"/>
<dbReference type="CTD" id="10465"/>
<dbReference type="MGI" id="MGI:106499">
    <property type="gene designation" value="Ppih"/>
</dbReference>
<dbReference type="VEuPathDB" id="HostDB:ENSMUSG00000033036"/>
<dbReference type="VEuPathDB" id="HostDB:ENSMUSG00000060288"/>
<dbReference type="eggNOG" id="KOG0879">
    <property type="taxonomic scope" value="Eukaryota"/>
</dbReference>
<dbReference type="GeneTree" id="ENSGT00940000154721"/>
<dbReference type="InParanoid" id="Q9D868"/>
<dbReference type="OMA" id="SVWGQVI"/>
<dbReference type="OrthoDB" id="193499at2759"/>
<dbReference type="PhylomeDB" id="Q9D868"/>
<dbReference type="TreeFam" id="TF312958"/>
<dbReference type="Reactome" id="R-MMU-72163">
    <property type="pathway name" value="mRNA Splicing - Major Pathway"/>
</dbReference>
<dbReference type="BioGRID-ORCS" id="66101">
    <property type="hits" value="6 hits in 80 CRISPR screens"/>
</dbReference>
<dbReference type="ChiTaRS" id="Ppih">
    <property type="organism name" value="mouse"/>
</dbReference>
<dbReference type="PRO" id="PR:Q9D868"/>
<dbReference type="Proteomes" id="UP000000589">
    <property type="component" value="Chromosome 4"/>
</dbReference>
<dbReference type="Proteomes" id="UP000000589">
    <property type="component" value="Chromosome 5"/>
</dbReference>
<dbReference type="RNAct" id="Q9D868">
    <property type="molecule type" value="protein"/>
</dbReference>
<dbReference type="Bgee" id="ENSMUSG00000033036">
    <property type="expression patterns" value="Expressed in yolk sac and 45 other cell types or tissues"/>
</dbReference>
<dbReference type="ExpressionAtlas" id="Q9D868">
    <property type="expression patterns" value="baseline and differential"/>
</dbReference>
<dbReference type="GO" id="GO:0005737">
    <property type="term" value="C:cytoplasm"/>
    <property type="evidence" value="ECO:0007669"/>
    <property type="project" value="UniProtKB-SubCell"/>
</dbReference>
<dbReference type="GO" id="GO:0016607">
    <property type="term" value="C:nuclear speck"/>
    <property type="evidence" value="ECO:0007669"/>
    <property type="project" value="UniProtKB-SubCell"/>
</dbReference>
<dbReference type="GO" id="GO:0005681">
    <property type="term" value="C:spliceosomal complex"/>
    <property type="evidence" value="ECO:0007669"/>
    <property type="project" value="UniProtKB-KW"/>
</dbReference>
<dbReference type="GO" id="GO:0003755">
    <property type="term" value="F:peptidyl-prolyl cis-trans isomerase activity"/>
    <property type="evidence" value="ECO:0000250"/>
    <property type="project" value="UniProtKB"/>
</dbReference>
<dbReference type="GO" id="GO:0006397">
    <property type="term" value="P:mRNA processing"/>
    <property type="evidence" value="ECO:0007669"/>
    <property type="project" value="UniProtKB-KW"/>
</dbReference>
<dbReference type="GO" id="GO:0006457">
    <property type="term" value="P:protein folding"/>
    <property type="evidence" value="ECO:0007669"/>
    <property type="project" value="InterPro"/>
</dbReference>
<dbReference type="GO" id="GO:0008380">
    <property type="term" value="P:RNA splicing"/>
    <property type="evidence" value="ECO:0007669"/>
    <property type="project" value="UniProtKB-KW"/>
</dbReference>
<dbReference type="CDD" id="cd01926">
    <property type="entry name" value="cyclophilin_ABH_like"/>
    <property type="match status" value="1"/>
</dbReference>
<dbReference type="FunFam" id="2.40.100.10:FF:000017">
    <property type="entry name" value="Peptidyl-prolyl cis-trans isomerase"/>
    <property type="match status" value="1"/>
</dbReference>
<dbReference type="Gene3D" id="2.40.100.10">
    <property type="entry name" value="Cyclophilin-like"/>
    <property type="match status" value="1"/>
</dbReference>
<dbReference type="InterPro" id="IPR029000">
    <property type="entry name" value="Cyclophilin-like_dom_sf"/>
</dbReference>
<dbReference type="InterPro" id="IPR020892">
    <property type="entry name" value="Cyclophilin-type_PPIase_CS"/>
</dbReference>
<dbReference type="InterPro" id="IPR002130">
    <property type="entry name" value="Cyclophilin-type_PPIase_dom"/>
</dbReference>
<dbReference type="PANTHER" id="PTHR11071">
    <property type="entry name" value="PEPTIDYL-PROLYL CIS-TRANS ISOMERASE"/>
    <property type="match status" value="1"/>
</dbReference>
<dbReference type="PANTHER" id="PTHR11071:SF561">
    <property type="entry name" value="PEPTIDYL-PROLYL CIS-TRANS ISOMERASE D-RELATED"/>
    <property type="match status" value="1"/>
</dbReference>
<dbReference type="Pfam" id="PF00160">
    <property type="entry name" value="Pro_isomerase"/>
    <property type="match status" value="1"/>
</dbReference>
<dbReference type="PRINTS" id="PR00153">
    <property type="entry name" value="CSAPPISMRASE"/>
</dbReference>
<dbReference type="SUPFAM" id="SSF50891">
    <property type="entry name" value="Cyclophilin-like"/>
    <property type="match status" value="1"/>
</dbReference>
<dbReference type="PROSITE" id="PS00170">
    <property type="entry name" value="CSA_PPIASE_1"/>
    <property type="match status" value="1"/>
</dbReference>
<dbReference type="PROSITE" id="PS50072">
    <property type="entry name" value="CSA_PPIASE_2"/>
    <property type="match status" value="1"/>
</dbReference>
<protein>
    <recommendedName>
        <fullName>Peptidyl-prolyl cis-trans isomerase H</fullName>
        <shortName>PPIase H</shortName>
        <ecNumber evidence="2">5.2.1.8</ecNumber>
    </recommendedName>
    <alternativeName>
        <fullName>Rotamase H</fullName>
    </alternativeName>
</protein>
<evidence type="ECO:0000250" key="1"/>
<evidence type="ECO:0000250" key="2">
    <source>
        <dbReference type="UniProtKB" id="O43447"/>
    </source>
</evidence>
<evidence type="ECO:0000255" key="3">
    <source>
        <dbReference type="PROSITE-ProRule" id="PRU00156"/>
    </source>
</evidence>
<evidence type="ECO:0000303" key="4">
    <source>
    </source>
</evidence>
<evidence type="ECO:0000303" key="5">
    <source>
    </source>
</evidence>
<evidence type="ECO:0000305" key="6"/>
<keyword id="KW-0007">Acetylation</keyword>
<keyword id="KW-0025">Alternative splicing</keyword>
<keyword id="KW-0143">Chaperone</keyword>
<keyword id="KW-0963">Cytoplasm</keyword>
<keyword id="KW-0413">Isomerase</keyword>
<keyword id="KW-0507">mRNA processing</keyword>
<keyword id="KW-0508">mRNA splicing</keyword>
<keyword id="KW-0539">Nucleus</keyword>
<keyword id="KW-1185">Reference proteome</keyword>
<keyword id="KW-0697">Rotamase</keyword>
<keyword id="KW-0747">Spliceosome</keyword>
<name>PPIH_MOUSE</name>
<feature type="initiator methionine" description="Removed" evidence="2">
    <location>
        <position position="1"/>
    </location>
</feature>
<feature type="chain" id="PRO_0000064163" description="Peptidyl-prolyl cis-trans isomerase H">
    <location>
        <begin position="2"/>
        <end position="188"/>
    </location>
</feature>
<feature type="domain" description="PPIase cyclophilin-type" evidence="3">
    <location>
        <begin position="14"/>
        <end position="176"/>
    </location>
</feature>
<feature type="modified residue" description="N-acetylalanine" evidence="2">
    <location>
        <position position="2"/>
    </location>
</feature>
<feature type="splice variant" id="VSP_008325" description="In isoform 2." evidence="4 5">
    <original>FQAPLGKRVQAWTHSLTCPALTGILALILMPTE</original>
    <variation>NVPTGPNNKPKLPVVISQCGEM</variation>
    <location>
        <begin position="156"/>
        <end position="188"/>
    </location>
</feature>
<sequence length="188" mass="20464">MAVANSSPVNPVVFFDVSIGGQEVGRMKIELFADVVPKTAENFRQFCTGEFRKDGVPIGYKGSTFHRVIKDFMIQGGDFVNGDGTGVASIYRGPFADENFKLRHSAPGLLSMANSGPSTNGCQFFITCSKCDWLDGKHVVFGKIIDGLLVMRKIEFQAPLGKRVQAWTHSLTCPALTGILALILMPTE</sequence>
<proteinExistence type="evidence at protein level"/>
<reference key="1">
    <citation type="journal article" date="2005" name="Science">
        <title>The transcriptional landscape of the mammalian genome.</title>
        <authorList>
            <person name="Carninci P."/>
            <person name="Kasukawa T."/>
            <person name="Katayama S."/>
            <person name="Gough J."/>
            <person name="Frith M.C."/>
            <person name="Maeda N."/>
            <person name="Oyama R."/>
            <person name="Ravasi T."/>
            <person name="Lenhard B."/>
            <person name="Wells C."/>
            <person name="Kodzius R."/>
            <person name="Shimokawa K."/>
            <person name="Bajic V.B."/>
            <person name="Brenner S.E."/>
            <person name="Batalov S."/>
            <person name="Forrest A.R."/>
            <person name="Zavolan M."/>
            <person name="Davis M.J."/>
            <person name="Wilming L.G."/>
            <person name="Aidinis V."/>
            <person name="Allen J.E."/>
            <person name="Ambesi-Impiombato A."/>
            <person name="Apweiler R."/>
            <person name="Aturaliya R.N."/>
            <person name="Bailey T.L."/>
            <person name="Bansal M."/>
            <person name="Baxter L."/>
            <person name="Beisel K.W."/>
            <person name="Bersano T."/>
            <person name="Bono H."/>
            <person name="Chalk A.M."/>
            <person name="Chiu K.P."/>
            <person name="Choudhary V."/>
            <person name="Christoffels A."/>
            <person name="Clutterbuck D.R."/>
            <person name="Crowe M.L."/>
            <person name="Dalla E."/>
            <person name="Dalrymple B.P."/>
            <person name="de Bono B."/>
            <person name="Della Gatta G."/>
            <person name="di Bernardo D."/>
            <person name="Down T."/>
            <person name="Engstrom P."/>
            <person name="Fagiolini M."/>
            <person name="Faulkner G."/>
            <person name="Fletcher C.F."/>
            <person name="Fukushima T."/>
            <person name="Furuno M."/>
            <person name="Futaki S."/>
            <person name="Gariboldi M."/>
            <person name="Georgii-Hemming P."/>
            <person name="Gingeras T.R."/>
            <person name="Gojobori T."/>
            <person name="Green R.E."/>
            <person name="Gustincich S."/>
            <person name="Harbers M."/>
            <person name="Hayashi Y."/>
            <person name="Hensch T.K."/>
            <person name="Hirokawa N."/>
            <person name="Hill D."/>
            <person name="Huminiecki L."/>
            <person name="Iacono M."/>
            <person name="Ikeo K."/>
            <person name="Iwama A."/>
            <person name="Ishikawa T."/>
            <person name="Jakt M."/>
            <person name="Kanapin A."/>
            <person name="Katoh M."/>
            <person name="Kawasawa Y."/>
            <person name="Kelso J."/>
            <person name="Kitamura H."/>
            <person name="Kitano H."/>
            <person name="Kollias G."/>
            <person name="Krishnan S.P."/>
            <person name="Kruger A."/>
            <person name="Kummerfeld S.K."/>
            <person name="Kurochkin I.V."/>
            <person name="Lareau L.F."/>
            <person name="Lazarevic D."/>
            <person name="Lipovich L."/>
            <person name="Liu J."/>
            <person name="Liuni S."/>
            <person name="McWilliam S."/>
            <person name="Madan Babu M."/>
            <person name="Madera M."/>
            <person name="Marchionni L."/>
            <person name="Matsuda H."/>
            <person name="Matsuzawa S."/>
            <person name="Miki H."/>
            <person name="Mignone F."/>
            <person name="Miyake S."/>
            <person name="Morris K."/>
            <person name="Mottagui-Tabar S."/>
            <person name="Mulder N."/>
            <person name="Nakano N."/>
            <person name="Nakauchi H."/>
            <person name="Ng P."/>
            <person name="Nilsson R."/>
            <person name="Nishiguchi S."/>
            <person name="Nishikawa S."/>
            <person name="Nori F."/>
            <person name="Ohara O."/>
            <person name="Okazaki Y."/>
            <person name="Orlando V."/>
            <person name="Pang K.C."/>
            <person name="Pavan W.J."/>
            <person name="Pavesi G."/>
            <person name="Pesole G."/>
            <person name="Petrovsky N."/>
            <person name="Piazza S."/>
            <person name="Reed J."/>
            <person name="Reid J.F."/>
            <person name="Ring B.Z."/>
            <person name="Ringwald M."/>
            <person name="Rost B."/>
            <person name="Ruan Y."/>
            <person name="Salzberg S.L."/>
            <person name="Sandelin A."/>
            <person name="Schneider C."/>
            <person name="Schoenbach C."/>
            <person name="Sekiguchi K."/>
            <person name="Semple C.A."/>
            <person name="Seno S."/>
            <person name="Sessa L."/>
            <person name="Sheng Y."/>
            <person name="Shibata Y."/>
            <person name="Shimada H."/>
            <person name="Shimada K."/>
            <person name="Silva D."/>
            <person name="Sinclair B."/>
            <person name="Sperling S."/>
            <person name="Stupka E."/>
            <person name="Sugiura K."/>
            <person name="Sultana R."/>
            <person name="Takenaka Y."/>
            <person name="Taki K."/>
            <person name="Tammoja K."/>
            <person name="Tan S.L."/>
            <person name="Tang S."/>
            <person name="Taylor M.S."/>
            <person name="Tegner J."/>
            <person name="Teichmann S.A."/>
            <person name="Ueda H.R."/>
            <person name="van Nimwegen E."/>
            <person name="Verardo R."/>
            <person name="Wei C.L."/>
            <person name="Yagi K."/>
            <person name="Yamanishi H."/>
            <person name="Zabarovsky E."/>
            <person name="Zhu S."/>
            <person name="Zimmer A."/>
            <person name="Hide W."/>
            <person name="Bult C."/>
            <person name="Grimmond S.M."/>
            <person name="Teasdale R.D."/>
            <person name="Liu E.T."/>
            <person name="Brusic V."/>
            <person name="Quackenbush J."/>
            <person name="Wahlestedt C."/>
            <person name="Mattick J.S."/>
            <person name="Hume D.A."/>
            <person name="Kai C."/>
            <person name="Sasaki D."/>
            <person name="Tomaru Y."/>
            <person name="Fukuda S."/>
            <person name="Kanamori-Katayama M."/>
            <person name="Suzuki M."/>
            <person name="Aoki J."/>
            <person name="Arakawa T."/>
            <person name="Iida J."/>
            <person name="Imamura K."/>
            <person name="Itoh M."/>
            <person name="Kato T."/>
            <person name="Kawaji H."/>
            <person name="Kawagashira N."/>
            <person name="Kawashima T."/>
            <person name="Kojima M."/>
            <person name="Kondo S."/>
            <person name="Konno H."/>
            <person name="Nakano K."/>
            <person name="Ninomiya N."/>
            <person name="Nishio T."/>
            <person name="Okada M."/>
            <person name="Plessy C."/>
            <person name="Shibata K."/>
            <person name="Shiraki T."/>
            <person name="Suzuki S."/>
            <person name="Tagami M."/>
            <person name="Waki K."/>
            <person name="Watahiki A."/>
            <person name="Okamura-Oho Y."/>
            <person name="Suzuki H."/>
            <person name="Kawai J."/>
            <person name="Hayashizaki Y."/>
        </authorList>
    </citation>
    <scope>NUCLEOTIDE SEQUENCE [LARGE SCALE MRNA] (ISOFORMS 1 AND 2)</scope>
    <source>
        <strain>C57BL/6J</strain>
        <tissue>Cerebellum</tissue>
        <tissue>Embryo</tissue>
        <tissue>Head</tissue>
        <tissue>Small intestine</tissue>
    </source>
</reference>
<reference key="2">
    <citation type="journal article" date="2004" name="Genome Res.">
        <title>The status, quality, and expansion of the NIH full-length cDNA project: the Mammalian Gene Collection (MGC).</title>
        <authorList>
            <consortium name="The MGC Project Team"/>
        </authorList>
    </citation>
    <scope>NUCLEOTIDE SEQUENCE [LARGE SCALE MRNA] (ISOFORM 2)</scope>
    <source>
        <tissue>Mammary cancer</tissue>
        <tissue>Pancreas</tissue>
    </source>
</reference>
<reference key="3">
    <citation type="journal article" date="2010" name="Cell">
        <title>A tissue-specific atlas of mouse protein phosphorylation and expression.</title>
        <authorList>
            <person name="Huttlin E.L."/>
            <person name="Jedrychowski M.P."/>
            <person name="Elias J.E."/>
            <person name="Goswami T."/>
            <person name="Rad R."/>
            <person name="Beausoleil S.A."/>
            <person name="Villen J."/>
            <person name="Haas W."/>
            <person name="Sowa M.E."/>
            <person name="Gygi S.P."/>
        </authorList>
    </citation>
    <scope>IDENTIFICATION BY MASS SPECTROMETRY [LARGE SCALE ANALYSIS]</scope>
    <source>
        <tissue>Brain</tissue>
        <tissue>Kidney</tissue>
        <tissue>Liver</tissue>
        <tissue>Lung</tissue>
        <tissue>Spleen</tissue>
        <tissue>Testis</tissue>
    </source>
</reference>
<accession>Q9D868</accession>
<accession>Q9CQU7</accession>
<organism>
    <name type="scientific">Mus musculus</name>
    <name type="common">Mouse</name>
    <dbReference type="NCBI Taxonomy" id="10090"/>
    <lineage>
        <taxon>Eukaryota</taxon>
        <taxon>Metazoa</taxon>
        <taxon>Chordata</taxon>
        <taxon>Craniata</taxon>
        <taxon>Vertebrata</taxon>
        <taxon>Euteleostomi</taxon>
        <taxon>Mammalia</taxon>
        <taxon>Eutheria</taxon>
        <taxon>Euarchontoglires</taxon>
        <taxon>Glires</taxon>
        <taxon>Rodentia</taxon>
        <taxon>Myomorpha</taxon>
        <taxon>Muroidea</taxon>
        <taxon>Muridae</taxon>
        <taxon>Murinae</taxon>
        <taxon>Mus</taxon>
        <taxon>Mus</taxon>
    </lineage>
</organism>
<comment type="function">
    <text evidence="2">PPIase that catalyzes the cis-trans isomerization of proline imidic peptide bonds in oligopeptides and may therefore assist protein folding. Participates in pre-mRNA splicing. May play a role in the assembly of the U4/U5/U6 tri-snRNP complex, one of the building blocks of the spliceosome. May act as a chaperone.</text>
</comment>
<comment type="catalytic activity">
    <reaction evidence="2">
        <text>[protein]-peptidylproline (omega=180) = [protein]-peptidylproline (omega=0)</text>
        <dbReference type="Rhea" id="RHEA:16237"/>
        <dbReference type="Rhea" id="RHEA-COMP:10747"/>
        <dbReference type="Rhea" id="RHEA-COMP:10748"/>
        <dbReference type="ChEBI" id="CHEBI:83833"/>
        <dbReference type="ChEBI" id="CHEBI:83834"/>
        <dbReference type="EC" id="5.2.1.8"/>
    </reaction>
</comment>
<comment type="activity regulation">
    <text evidence="2">Inhibited by cyclosporin A.</text>
</comment>
<comment type="subunit">
    <text evidence="1">Interacts directly with PRPF4. Part of a heteromeric complex containing PPIH, PRPF3 and PRPF4 that is stable in the absence of RNA. Component of the U4/U6-U5 tri-snRNP complex composed of the U4, U6 and U5 snRNAs and at least PRPF3, PRPF4, PRPF6, PRPF8, PRPF31, SNRNP200, TXNL4A, SNRNP40, DDX23, CD2BP2, PPIH, SNU13, EFTUD2, SART1 and USP39. Heterodimer with PRPF18. Heterodimer with PRPF18 (By similarity).</text>
</comment>
<comment type="subcellular location">
    <subcellularLocation>
        <location evidence="1">Nucleus speckle</location>
    </subcellularLocation>
    <subcellularLocation>
        <location evidence="1">Cytoplasm</location>
    </subcellularLocation>
    <text evidence="1">Colocalizes with spliceosomal snRNPs. A small proportion may also be cytoplasmic (By similarity).</text>
</comment>
<comment type="alternative products">
    <event type="alternative splicing"/>
    <isoform>
        <id>Q9D868-1</id>
        <name>1</name>
        <sequence type="displayed"/>
    </isoform>
    <isoform>
        <id>Q9D868-2</id>
        <name>2</name>
        <sequence type="described" ref="VSP_008325"/>
    </isoform>
</comment>
<comment type="similarity">
    <text evidence="6">Belongs to the cyclophilin-type PPIase family. PPIase H subfamily.</text>
</comment>